<reference key="1">
    <citation type="journal article" date="2006" name="J. Bacteriol.">
        <title>Complete genome sequence of Yersinia pestis strains Antiqua and Nepal516: evidence of gene reduction in an emerging pathogen.</title>
        <authorList>
            <person name="Chain P.S.G."/>
            <person name="Hu P."/>
            <person name="Malfatti S.A."/>
            <person name="Radnedge L."/>
            <person name="Larimer F."/>
            <person name="Vergez L.M."/>
            <person name="Worsham P."/>
            <person name="Chu M.C."/>
            <person name="Andersen G.L."/>
        </authorList>
    </citation>
    <scope>NUCLEOTIDE SEQUENCE [LARGE SCALE GENOMIC DNA]</scope>
    <source>
        <strain>Antiqua</strain>
    </source>
</reference>
<comment type="similarity">
    <text evidence="1">Belongs to the SfsA family.</text>
</comment>
<comment type="sequence caution" evidence="2">
    <conflict type="erroneous initiation">
        <sequence resource="EMBL-CDS" id="ABG14858"/>
    </conflict>
</comment>
<dbReference type="EMBL" id="CP000308">
    <property type="protein sequence ID" value="ABG14858.1"/>
    <property type="status" value="ALT_INIT"/>
    <property type="molecule type" value="Genomic_DNA"/>
</dbReference>
<dbReference type="RefSeq" id="WP_002228221.1">
    <property type="nucleotide sequence ID" value="NZ_CP009906.1"/>
</dbReference>
<dbReference type="SMR" id="Q1C3W4"/>
<dbReference type="GeneID" id="57975313"/>
<dbReference type="KEGG" id="ypa:YPA_2896"/>
<dbReference type="Proteomes" id="UP000001971">
    <property type="component" value="Chromosome"/>
</dbReference>
<dbReference type="GO" id="GO:0003677">
    <property type="term" value="F:DNA binding"/>
    <property type="evidence" value="ECO:0007669"/>
    <property type="project" value="InterPro"/>
</dbReference>
<dbReference type="CDD" id="cd22359">
    <property type="entry name" value="SfsA-like_bacterial"/>
    <property type="match status" value="1"/>
</dbReference>
<dbReference type="FunFam" id="2.40.50.580:FF:000001">
    <property type="entry name" value="Sugar fermentation stimulation protein A"/>
    <property type="match status" value="1"/>
</dbReference>
<dbReference type="FunFam" id="3.40.1350.60:FF:000001">
    <property type="entry name" value="Sugar fermentation stimulation protein A"/>
    <property type="match status" value="1"/>
</dbReference>
<dbReference type="Gene3D" id="2.40.50.580">
    <property type="match status" value="1"/>
</dbReference>
<dbReference type="Gene3D" id="3.40.1350.60">
    <property type="match status" value="1"/>
</dbReference>
<dbReference type="HAMAP" id="MF_00095">
    <property type="entry name" value="SfsA"/>
    <property type="match status" value="1"/>
</dbReference>
<dbReference type="InterPro" id="IPR005224">
    <property type="entry name" value="SfsA"/>
</dbReference>
<dbReference type="InterPro" id="IPR040452">
    <property type="entry name" value="SfsA_C"/>
</dbReference>
<dbReference type="InterPro" id="IPR041465">
    <property type="entry name" value="SfsA_N"/>
</dbReference>
<dbReference type="NCBIfam" id="TIGR00230">
    <property type="entry name" value="sfsA"/>
    <property type="match status" value="1"/>
</dbReference>
<dbReference type="PANTHER" id="PTHR30545">
    <property type="entry name" value="SUGAR FERMENTATION STIMULATION PROTEIN A"/>
    <property type="match status" value="1"/>
</dbReference>
<dbReference type="PANTHER" id="PTHR30545:SF2">
    <property type="entry name" value="SUGAR FERMENTATION STIMULATION PROTEIN A"/>
    <property type="match status" value="1"/>
</dbReference>
<dbReference type="Pfam" id="PF03749">
    <property type="entry name" value="SfsA"/>
    <property type="match status" value="1"/>
</dbReference>
<dbReference type="Pfam" id="PF17746">
    <property type="entry name" value="SfsA_N"/>
    <property type="match status" value="1"/>
</dbReference>
<evidence type="ECO:0000255" key="1">
    <source>
        <dbReference type="HAMAP-Rule" id="MF_00095"/>
    </source>
</evidence>
<evidence type="ECO:0000305" key="2"/>
<name>SFSA_YERPA</name>
<accession>Q1C3W4</accession>
<proteinExistence type="inferred from homology"/>
<organism>
    <name type="scientific">Yersinia pestis bv. Antiqua (strain Antiqua)</name>
    <dbReference type="NCBI Taxonomy" id="360102"/>
    <lineage>
        <taxon>Bacteria</taxon>
        <taxon>Pseudomonadati</taxon>
        <taxon>Pseudomonadota</taxon>
        <taxon>Gammaproteobacteria</taxon>
        <taxon>Enterobacterales</taxon>
        <taxon>Yersiniaceae</taxon>
        <taxon>Yersinia</taxon>
    </lineage>
</organism>
<gene>
    <name evidence="1" type="primary">sfsA</name>
    <name type="ordered locus">YPA_2896</name>
</gene>
<sequence length="245" mass="27696">MLQFTPPLQPATLILRYKRFLADIVTPAGEALTIHCANTGAMTGCATPGDTIWYSTSDNPKRKYPQSWELTQTQTGDWICVNTMRANELVNLAIEKNQIAELSGYNFVRKEVKYGEENSRIDLLLQAEDRRDCYIEVKSVTLLQQQCGYFPDAVTLRGQKHLRELQNRVVNGHRAVLFFAVLHTGIKQVAPARHIDRRYAELLVQAQQAGVEVICYGFQLSPDGIELNTRLPLLLDEMLSSENAE</sequence>
<feature type="chain" id="PRO_0000340164" description="Sugar fermentation stimulation protein homolog">
    <location>
        <begin position="1"/>
        <end position="245"/>
    </location>
</feature>
<protein>
    <recommendedName>
        <fullName evidence="1">Sugar fermentation stimulation protein homolog</fullName>
    </recommendedName>
</protein>